<accession>O93869</accession>
<accession>Q7S7N0</accession>
<accession>V5IN77</accession>
<evidence type="ECO:0000250" key="1">
    <source>
        <dbReference type="UniProtKB" id="P13807"/>
    </source>
</evidence>
<evidence type="ECO:0000250" key="2">
    <source>
        <dbReference type="UniProtKB" id="P23337"/>
    </source>
</evidence>
<evidence type="ECO:0000256" key="3">
    <source>
        <dbReference type="SAM" id="MobiDB-lite"/>
    </source>
</evidence>
<evidence type="ECO:0000269" key="4">
    <source>
    </source>
</evidence>
<evidence type="ECO:0000305" key="5"/>
<evidence type="ECO:0000312" key="6">
    <source>
        <dbReference type="EMBL" id="AAC98780.2"/>
    </source>
</evidence>
<keyword id="KW-0021">Allosteric enzyme</keyword>
<keyword id="KW-0320">Glycogen biosynthesis</keyword>
<keyword id="KW-0328">Glycosyltransferase</keyword>
<keyword id="KW-0597">Phosphoprotein</keyword>
<keyword id="KW-1185">Reference proteome</keyword>
<keyword id="KW-0808">Transferase</keyword>
<reference evidence="6" key="1">
    <citation type="submission" date="1999-06" db="EMBL/GenBank/DDBJ databases">
        <authorList>
            <person name="de Paula R."/>
            <person name="Terenzi H.F."/>
            <person name="Bertolini M.C."/>
        </authorList>
    </citation>
    <scope>NUCLEOTIDE SEQUENCE [MRNA]</scope>
</reference>
<reference key="2">
    <citation type="journal article" date="2003" name="Nucleic Acids Res.">
        <title>What's in the genome of a filamentous fungus? Analysis of the Neurospora genome sequence.</title>
        <authorList>
            <person name="Mannhaupt G."/>
            <person name="Montrone C."/>
            <person name="Haase D."/>
            <person name="Mewes H.-W."/>
            <person name="Aign V."/>
            <person name="Hoheisel J.D."/>
            <person name="Fartmann B."/>
            <person name="Nyakatura G."/>
            <person name="Kempken F."/>
            <person name="Maier J."/>
            <person name="Schulte U."/>
        </authorList>
    </citation>
    <scope>NUCLEOTIDE SEQUENCE [LARGE SCALE GENOMIC DNA]</scope>
    <source>
        <strain>ATCC 24698 / 74-OR23-1A / CBS 708.71 / DSM 1257 / FGSC 987</strain>
    </source>
</reference>
<reference key="3">
    <citation type="journal article" date="2003" name="Nature">
        <title>The genome sequence of the filamentous fungus Neurospora crassa.</title>
        <authorList>
            <person name="Galagan J.E."/>
            <person name="Calvo S.E."/>
            <person name="Borkovich K.A."/>
            <person name="Selker E.U."/>
            <person name="Read N.D."/>
            <person name="Jaffe D.B."/>
            <person name="FitzHugh W."/>
            <person name="Ma L.-J."/>
            <person name="Smirnov S."/>
            <person name="Purcell S."/>
            <person name="Rehman B."/>
            <person name="Elkins T."/>
            <person name="Engels R."/>
            <person name="Wang S."/>
            <person name="Nielsen C.B."/>
            <person name="Butler J."/>
            <person name="Endrizzi M."/>
            <person name="Qui D."/>
            <person name="Ianakiev P."/>
            <person name="Bell-Pedersen D."/>
            <person name="Nelson M.A."/>
            <person name="Werner-Washburne M."/>
            <person name="Selitrennikoff C.P."/>
            <person name="Kinsey J.A."/>
            <person name="Braun E.L."/>
            <person name="Zelter A."/>
            <person name="Schulte U."/>
            <person name="Kothe G.O."/>
            <person name="Jedd G."/>
            <person name="Mewes H.-W."/>
            <person name="Staben C."/>
            <person name="Marcotte E."/>
            <person name="Greenberg D."/>
            <person name="Roy A."/>
            <person name="Foley K."/>
            <person name="Naylor J."/>
            <person name="Stange-Thomann N."/>
            <person name="Barrett R."/>
            <person name="Gnerre S."/>
            <person name="Kamal M."/>
            <person name="Kamvysselis M."/>
            <person name="Mauceli E.W."/>
            <person name="Bielke C."/>
            <person name="Rudd S."/>
            <person name="Frishman D."/>
            <person name="Krystofova S."/>
            <person name="Rasmussen C."/>
            <person name="Metzenberg R.L."/>
            <person name="Perkins D.D."/>
            <person name="Kroken S."/>
            <person name="Cogoni C."/>
            <person name="Macino G."/>
            <person name="Catcheside D.E.A."/>
            <person name="Li W."/>
            <person name="Pratt R.J."/>
            <person name="Osmani S.A."/>
            <person name="DeSouza C.P.C."/>
            <person name="Glass N.L."/>
            <person name="Orbach M.J."/>
            <person name="Berglund J.A."/>
            <person name="Voelker R."/>
            <person name="Yarden O."/>
            <person name="Plamann M."/>
            <person name="Seiler S."/>
            <person name="Dunlap J.C."/>
            <person name="Radford A."/>
            <person name="Aramayo R."/>
            <person name="Natvig D.O."/>
            <person name="Alex L.A."/>
            <person name="Mannhaupt G."/>
            <person name="Ebbole D.J."/>
            <person name="Freitag M."/>
            <person name="Paulsen I."/>
            <person name="Sachs M.S."/>
            <person name="Lander E.S."/>
            <person name="Nusbaum C."/>
            <person name="Birren B.W."/>
        </authorList>
    </citation>
    <scope>NUCLEOTIDE SEQUENCE [LARGE SCALE GENOMIC DNA]</scope>
    <source>
        <strain>ATCC 24698 / 74-OR23-1A / CBS 708.71 / DSM 1257 / FGSC 987</strain>
    </source>
</reference>
<reference key="4">
    <citation type="journal article" date="2005" name="FEBS Lett.">
        <title>Biochemical characterization of Neurospora crassa glycogenin (GNN), the self-glucosylating initiator of glycogen synthesis.</title>
        <authorList>
            <person name="de Paula R.M."/>
            <person name="Wilson W.A."/>
            <person name="Roach P.J."/>
            <person name="Terenzi H.F."/>
            <person name="Bertolini M.C."/>
        </authorList>
    </citation>
    <scope>INTERACTION WITH GNN</scope>
</reference>
<feature type="chain" id="PRO_0000194772" description="Glycogen [starch] synthase">
    <location>
        <begin position="1"/>
        <end position="706"/>
    </location>
</feature>
<feature type="region of interest" description="Disordered" evidence="3">
    <location>
        <begin position="670"/>
        <end position="706"/>
    </location>
</feature>
<feature type="binding site" evidence="1">
    <location>
        <position position="26"/>
    </location>
    <ligand>
        <name>UDP</name>
        <dbReference type="ChEBI" id="CHEBI:58223"/>
    </ligand>
</feature>
<feature type="binding site" evidence="1">
    <location>
        <position position="191"/>
    </location>
    <ligand>
        <name>UDP-alpha-D-glucose</name>
        <dbReference type="ChEBI" id="CHEBI:58885"/>
    </ligand>
</feature>
<feature type="binding site" evidence="1">
    <location>
        <position position="197"/>
    </location>
    <ligand>
        <name>UDP-alpha-D-glucose</name>
        <dbReference type="ChEBI" id="CHEBI:58885"/>
    </ligand>
</feature>
<feature type="binding site" description="in other chain" evidence="1">
    <location>
        <position position="277"/>
    </location>
    <ligand>
        <name>alpha-D-glucose 6-phosphate</name>
        <dbReference type="ChEBI" id="CHEBI:58225"/>
        <note>allosteric activator; ligand shared between two neighboring subunits</note>
    </ligand>
</feature>
<feature type="binding site" description="in other chain" evidence="1">
    <location>
        <position position="278"/>
    </location>
    <ligand>
        <name>alpha-D-glucose 6-phosphate</name>
        <dbReference type="ChEBI" id="CHEBI:58225"/>
        <note>allosteric activator; ligand shared between two neighboring subunits</note>
    </ligand>
</feature>
<feature type="binding site" evidence="1">
    <location>
        <position position="280"/>
    </location>
    <ligand>
        <name>alpha-D-glucose 6-phosphate</name>
        <dbReference type="ChEBI" id="CHEBI:58225"/>
        <note>allosteric activator; ligand shared between two neighboring subunits</note>
    </ligand>
</feature>
<feature type="binding site" evidence="1">
    <location>
        <position position="283"/>
    </location>
    <ligand>
        <name>alpha-D-glucose 6-phosphate</name>
        <dbReference type="ChEBI" id="CHEBI:58225"/>
        <note>allosteric activator; ligand shared between two neighboring subunits</note>
    </ligand>
</feature>
<feature type="binding site" evidence="1">
    <location>
        <position position="287"/>
    </location>
    <ligand>
        <name>alpha-D-glucose 6-phosphate</name>
        <dbReference type="ChEBI" id="CHEBI:58225"/>
        <note>allosteric activator; ligand shared between two neighboring subunits</note>
    </ligand>
</feature>
<feature type="binding site" evidence="1">
    <location>
        <position position="317"/>
    </location>
    <ligand>
        <name>UDP</name>
        <dbReference type="ChEBI" id="CHEBI:58223"/>
    </ligand>
</feature>
<feature type="binding site" evidence="1">
    <location>
        <position position="317"/>
    </location>
    <ligand>
        <name>UDP-alpha-D-glucose</name>
        <dbReference type="ChEBI" id="CHEBI:58885"/>
    </ligand>
</feature>
<feature type="binding site" evidence="1">
    <location>
        <position position="491"/>
    </location>
    <ligand>
        <name>alpha-D-glucose 6-phosphate</name>
        <dbReference type="ChEBI" id="CHEBI:58225"/>
        <note>allosteric activator; ligand shared between two neighboring subunits</note>
    </ligand>
</feature>
<feature type="binding site" evidence="1">
    <location>
        <position position="500"/>
    </location>
    <ligand>
        <name>UDP-alpha-D-glucose</name>
        <dbReference type="ChEBI" id="CHEBI:58885"/>
    </ligand>
</feature>
<feature type="binding site" evidence="1">
    <location>
        <position position="502"/>
    </location>
    <ligand>
        <name>UDP-alpha-D-glucose</name>
        <dbReference type="ChEBI" id="CHEBI:58885"/>
    </ligand>
</feature>
<feature type="binding site" evidence="1">
    <location>
        <position position="503"/>
    </location>
    <ligand>
        <name>UDP-alpha-D-glucose</name>
        <dbReference type="ChEBI" id="CHEBI:58885"/>
    </ligand>
</feature>
<feature type="binding site" evidence="1">
    <location>
        <position position="505"/>
    </location>
    <ligand>
        <name>UDP</name>
        <dbReference type="ChEBI" id="CHEBI:58223"/>
    </ligand>
</feature>
<feature type="binding site" evidence="1">
    <location>
        <position position="572"/>
    </location>
    <ligand>
        <name>alpha-D-glucose 6-phosphate</name>
        <dbReference type="ChEBI" id="CHEBI:58225"/>
        <note>allosteric activator; ligand shared between two neighboring subunits</note>
    </ligand>
</feature>
<feature type="binding site" evidence="1">
    <location>
        <position position="576"/>
    </location>
    <ligand>
        <name>alpha-D-glucose 6-phosphate</name>
        <dbReference type="ChEBI" id="CHEBI:58225"/>
        <note>allosteric activator; ligand shared between two neighboring subunits</note>
    </ligand>
</feature>
<name>GYS_NEUCR</name>
<gene>
    <name type="primary">gsy-1</name>
    <name type="ORF">7F4.080</name>
    <name type="ORF">NCU06687</name>
</gene>
<comment type="function">
    <text evidence="2">Glycogen synthase participates in the glycogen biosynthetic process along with glycogenin and glycogen branching enzyme. Extends the primer composed of a few glucose units formed by glycogenin by adding new glucose units to it. In this context, glycogen synthase transfers the glycosyl residue from UDP-Glc to the non-reducing end of alpha-1,4-glucan.</text>
</comment>
<comment type="catalytic activity">
    <reaction evidence="2">
        <text>[(1-&gt;4)-alpha-D-glucosyl](n) + UDP-alpha-D-glucose = [(1-&gt;4)-alpha-D-glucosyl](n+1) + UDP + H(+)</text>
        <dbReference type="Rhea" id="RHEA:18549"/>
        <dbReference type="Rhea" id="RHEA-COMP:9584"/>
        <dbReference type="Rhea" id="RHEA-COMP:9587"/>
        <dbReference type="ChEBI" id="CHEBI:15378"/>
        <dbReference type="ChEBI" id="CHEBI:15444"/>
        <dbReference type="ChEBI" id="CHEBI:58223"/>
        <dbReference type="ChEBI" id="CHEBI:58885"/>
        <dbReference type="EC" id="2.4.1.11"/>
    </reaction>
    <physiologicalReaction direction="left-to-right" evidence="2">
        <dbReference type="Rhea" id="RHEA:18550"/>
    </physiologicalReaction>
</comment>
<comment type="activity regulation">
    <text evidence="2">Allosteric activation by glucose-6-phosphate, and phosphorylation by a cAMP-dependent kinase.</text>
</comment>
<comment type="pathway">
    <text evidence="2">Glycan biosynthesis; glycogen biosynthesis.</text>
</comment>
<comment type="subunit">
    <text evidence="4">Interacts with glucogenin gnn; the interaction is direct.</text>
</comment>
<comment type="similarity">
    <text evidence="5">Belongs to the glycosyltransferase 3 family.</text>
</comment>
<sequence length="706" mass="80907">MAHDNREPREVKNHLLFEVATEVAHRVGGIYSVLKSKAPVTTAEYGDRYTLIGPLNHQSAAVEVEELEPSNPELKATIQAMRDRGIGILYGRWLIEGAPRVLLFDTKTAYGYMNEWKTDLWNVASIPSPDNDEETNEAIVFGYLVAWFLGEFVCHEKRKAVIAHFHEWLAGVALPLTKKRQIDVTTIFTTHATLLGRYLCAGSVDFYNNLQWFDVDAEAGKRGIYHRYCIERAAAHSCDVFTTVSHITAYESEHLLKRKPDGVLPNGLNVTKFSAMHEFQNLHQQNKEKIHDFVRGHFYGHYDFEPENTLYFFTAGRYEFRNKGVDMFIESLARLNHRLKTAGSKTTVVAFIIMPAQTTSLTVEALKGQAVIKSLRDTVDVIERGIGRRIFERSVKWHEGDPLPEEKELITSQDRVLLRRRLFAMKRHTLPPIVTHNMLNDHEDPILNQIRRVQLFNHPSDRVKIVFHPEFLSSANPVLPLDYDDFVRGTHLGVFASYYEPWGYTPAECTVMGVPSITTNLSGFGCYMEELIENSSDYGIYIVDRRSKGVDDSVNQLTQYMFEFTQKSRRQRINQRNRTERLSDLLDWKRMGMEYVKARQLALRRAYPTSFNGEEEEDFIPGVEQKISRPFSVPGSPRDRTGMMTPGDFASLQESHEGLSTEDYVAWKLPEEEDPEEYPFPLTLKQRTGPGSPLDSIQGLQLNGTR</sequence>
<organism>
    <name type="scientific">Neurospora crassa (strain ATCC 24698 / 74-OR23-1A / CBS 708.71 / DSM 1257 / FGSC 987)</name>
    <dbReference type="NCBI Taxonomy" id="367110"/>
    <lineage>
        <taxon>Eukaryota</taxon>
        <taxon>Fungi</taxon>
        <taxon>Dikarya</taxon>
        <taxon>Ascomycota</taxon>
        <taxon>Pezizomycotina</taxon>
        <taxon>Sordariomycetes</taxon>
        <taxon>Sordariomycetidae</taxon>
        <taxon>Sordariales</taxon>
        <taxon>Sordariaceae</taxon>
        <taxon>Neurospora</taxon>
    </lineage>
</organism>
<dbReference type="EC" id="2.4.1.11" evidence="2"/>
<dbReference type="EMBL" id="AF056080">
    <property type="protein sequence ID" value="AAC98780.2"/>
    <property type="molecule type" value="mRNA"/>
</dbReference>
<dbReference type="EMBL" id="BX294020">
    <property type="protein sequence ID" value="CAD70912.1"/>
    <property type="molecule type" value="Genomic_DNA"/>
</dbReference>
<dbReference type="EMBL" id="CM002240">
    <property type="protein sequence ID" value="ESA42591.1"/>
    <property type="molecule type" value="Genomic_DNA"/>
</dbReference>
<dbReference type="EMBL" id="CM002240">
    <property type="protein sequence ID" value="ESA42592.1"/>
    <property type="molecule type" value="Genomic_DNA"/>
</dbReference>
<dbReference type="EMBL" id="CM002240">
    <property type="protein sequence ID" value="ESA42593.1"/>
    <property type="molecule type" value="Genomic_DNA"/>
</dbReference>
<dbReference type="EMBL" id="CM002240">
    <property type="protein sequence ID" value="ESA42594.1"/>
    <property type="molecule type" value="Genomic_DNA"/>
</dbReference>
<dbReference type="RefSeq" id="XP_011394695.1">
    <property type="nucleotide sequence ID" value="XM_011396393.1"/>
</dbReference>
<dbReference type="RefSeq" id="XP_011394696.1">
    <property type="nucleotide sequence ID" value="XM_011396394.1"/>
</dbReference>
<dbReference type="RefSeq" id="XP_011394697.1">
    <property type="nucleotide sequence ID" value="XM_011396395.1"/>
</dbReference>
<dbReference type="RefSeq" id="XP_011394698.1">
    <property type="nucleotide sequence ID" value="XM_011396396.1"/>
</dbReference>
<dbReference type="SMR" id="O93869"/>
<dbReference type="FunCoup" id="O93869">
    <property type="interactions" value="391"/>
</dbReference>
<dbReference type="STRING" id="367110.O93869"/>
<dbReference type="CAZy" id="GT3">
    <property type="family name" value="Glycosyltransferase Family 3"/>
</dbReference>
<dbReference type="PaxDb" id="5141-EFNCRP00000006623"/>
<dbReference type="EnsemblFungi" id="ESA42591">
    <property type="protein sequence ID" value="ESA42591"/>
    <property type="gene ID" value="NCU06687"/>
</dbReference>
<dbReference type="EnsemblFungi" id="ESA42592">
    <property type="protein sequence ID" value="ESA42592"/>
    <property type="gene ID" value="NCU06687"/>
</dbReference>
<dbReference type="EnsemblFungi" id="ESA42593">
    <property type="protein sequence ID" value="ESA42593"/>
    <property type="gene ID" value="NCU06687"/>
</dbReference>
<dbReference type="EnsemblFungi" id="ESA42594">
    <property type="protein sequence ID" value="ESA42594"/>
    <property type="gene ID" value="NCU06687"/>
</dbReference>
<dbReference type="GeneID" id="3877149"/>
<dbReference type="KEGG" id="ncr:NCU06687"/>
<dbReference type="VEuPathDB" id="FungiDB:NCU06687"/>
<dbReference type="HOGENOM" id="CLU_015910_1_0_1"/>
<dbReference type="InParanoid" id="O93869"/>
<dbReference type="OMA" id="RDVRNHI"/>
<dbReference type="OrthoDB" id="6335297at2759"/>
<dbReference type="UniPathway" id="UPA00164"/>
<dbReference type="Proteomes" id="UP000001805">
    <property type="component" value="Chromosome 2, Linkage Group V"/>
</dbReference>
<dbReference type="GO" id="GO:0005737">
    <property type="term" value="C:cytoplasm"/>
    <property type="evidence" value="ECO:0000318"/>
    <property type="project" value="GO_Central"/>
</dbReference>
<dbReference type="GO" id="GO:0042587">
    <property type="term" value="C:glycogen granule"/>
    <property type="evidence" value="ECO:0000250"/>
    <property type="project" value="UniProtKB"/>
</dbReference>
<dbReference type="GO" id="GO:0004373">
    <property type="term" value="F:alpha-1,4-glucan glucosyltransferase (UDP-glucose donor) activity"/>
    <property type="evidence" value="ECO:0000318"/>
    <property type="project" value="GO_Central"/>
</dbReference>
<dbReference type="GO" id="GO:0005978">
    <property type="term" value="P:glycogen biosynthetic process"/>
    <property type="evidence" value="ECO:0000318"/>
    <property type="project" value="GO_Central"/>
</dbReference>
<dbReference type="CDD" id="cd03793">
    <property type="entry name" value="GT3_GSY2-like"/>
    <property type="match status" value="1"/>
</dbReference>
<dbReference type="FunFam" id="3.40.50.2000:FF:000014">
    <property type="entry name" value="Glycogen [starch] synthase"/>
    <property type="match status" value="1"/>
</dbReference>
<dbReference type="FunFam" id="3.40.50.2000:FF:000045">
    <property type="entry name" value="Glycogen [starch] synthase"/>
    <property type="match status" value="1"/>
</dbReference>
<dbReference type="Gene3D" id="6.10.260.10">
    <property type="match status" value="1"/>
</dbReference>
<dbReference type="Gene3D" id="3.40.50.2000">
    <property type="entry name" value="Glycogen Phosphorylase B"/>
    <property type="match status" value="2"/>
</dbReference>
<dbReference type="InterPro" id="IPR008631">
    <property type="entry name" value="Glycogen_synth"/>
</dbReference>
<dbReference type="PANTHER" id="PTHR10176:SF3">
    <property type="entry name" value="GLYCOGEN [STARCH] SYNTHASE"/>
    <property type="match status" value="1"/>
</dbReference>
<dbReference type="PANTHER" id="PTHR10176">
    <property type="entry name" value="GLYCOGEN SYNTHASE"/>
    <property type="match status" value="1"/>
</dbReference>
<dbReference type="Pfam" id="PF05693">
    <property type="entry name" value="Glycogen_syn"/>
    <property type="match status" value="1"/>
</dbReference>
<dbReference type="SUPFAM" id="SSF53756">
    <property type="entry name" value="UDP-Glycosyltransferase/glycogen phosphorylase"/>
    <property type="match status" value="2"/>
</dbReference>
<proteinExistence type="evidence at protein level"/>
<protein>
    <recommendedName>
        <fullName>Glycogen [starch] synthase</fullName>
        <ecNumber evidence="2">2.4.1.11</ecNumber>
    </recommendedName>
</protein>